<feature type="chain" id="PRO_0000084935" description="Catalase isozyme 1">
    <location>
        <begin position="1"/>
        <end position="492"/>
    </location>
</feature>
<feature type="active site" evidence="2">
    <location>
        <position position="65"/>
    </location>
</feature>
<feature type="active site" evidence="2">
    <location>
        <position position="138"/>
    </location>
</feature>
<feature type="binding site" description="axial binding residue" evidence="1">
    <location>
        <position position="348"/>
    </location>
    <ligand>
        <name>heme</name>
        <dbReference type="ChEBI" id="CHEBI:30413"/>
    </ligand>
    <ligandPart>
        <name>Fe</name>
        <dbReference type="ChEBI" id="CHEBI:18248"/>
    </ligandPart>
</feature>
<comment type="function">
    <text>Occurs in almost all aerobically respiring organisms and serves to protect cells from the toxic effects of hydrogen peroxide.</text>
</comment>
<comment type="catalytic activity">
    <reaction evidence="2">
        <text>2 H2O2 = O2 + 2 H2O</text>
        <dbReference type="Rhea" id="RHEA:20309"/>
        <dbReference type="ChEBI" id="CHEBI:15377"/>
        <dbReference type="ChEBI" id="CHEBI:15379"/>
        <dbReference type="ChEBI" id="CHEBI:16240"/>
        <dbReference type="EC" id="1.11.1.6"/>
    </reaction>
</comment>
<comment type="cofactor">
    <cofactor evidence="1">
        <name>heme</name>
        <dbReference type="ChEBI" id="CHEBI:30413"/>
    </cofactor>
</comment>
<comment type="subunit">
    <text evidence="1">Homotetramer.</text>
</comment>
<comment type="subcellular location">
    <subcellularLocation>
        <location>Glyoxysome</location>
    </subcellularLocation>
</comment>
<comment type="tissue specificity">
    <text>High expression in seeds and early seedlings.</text>
</comment>
<comment type="similarity">
    <text evidence="3">Belongs to the catalase family.</text>
</comment>
<protein>
    <recommendedName>
        <fullName>Catalase isozyme 1</fullName>
        <ecNumber>1.11.1.6</ecNumber>
    </recommendedName>
</protein>
<reference key="1">
    <citation type="journal article" date="1997" name="Plant Mol. Biol.">
        <title>cDNA cloning and differential gene expression of three catalases in pumpkin.</title>
        <authorList>
            <person name="Esaka M."/>
            <person name="Yamada N."/>
            <person name="Kitabayashi M."/>
            <person name="Setoguchi Y."/>
            <person name="Tsugeki R."/>
            <person name="Kondo M."/>
            <person name="Nishimura M."/>
        </authorList>
    </citation>
    <scope>NUCLEOTIDE SEQUENCE [MRNA]</scope>
    <source>
        <tissue>Cotyledon</tissue>
    </source>
</reference>
<gene>
    <name type="primary">CAT1</name>
</gene>
<accession>P48350</accession>
<dbReference type="EC" id="1.11.1.6"/>
<dbReference type="EMBL" id="D55645">
    <property type="protein sequence ID" value="BAA09506.1"/>
    <property type="molecule type" value="mRNA"/>
</dbReference>
<dbReference type="SMR" id="P48350"/>
<dbReference type="GO" id="GO:0009514">
    <property type="term" value="C:glyoxysome"/>
    <property type="evidence" value="ECO:0007669"/>
    <property type="project" value="UniProtKB-SubCell"/>
</dbReference>
<dbReference type="GO" id="GO:0005886">
    <property type="term" value="C:plasma membrane"/>
    <property type="evidence" value="ECO:0007669"/>
    <property type="project" value="TreeGrafter"/>
</dbReference>
<dbReference type="GO" id="GO:0004096">
    <property type="term" value="F:catalase activity"/>
    <property type="evidence" value="ECO:0007669"/>
    <property type="project" value="UniProtKB-EC"/>
</dbReference>
<dbReference type="GO" id="GO:0020037">
    <property type="term" value="F:heme binding"/>
    <property type="evidence" value="ECO:0007669"/>
    <property type="project" value="InterPro"/>
</dbReference>
<dbReference type="GO" id="GO:0046872">
    <property type="term" value="F:metal ion binding"/>
    <property type="evidence" value="ECO:0007669"/>
    <property type="project" value="UniProtKB-KW"/>
</dbReference>
<dbReference type="GO" id="GO:0042744">
    <property type="term" value="P:hydrogen peroxide catabolic process"/>
    <property type="evidence" value="ECO:0007669"/>
    <property type="project" value="UniProtKB-KW"/>
</dbReference>
<dbReference type="GO" id="GO:0042542">
    <property type="term" value="P:response to hydrogen peroxide"/>
    <property type="evidence" value="ECO:0007669"/>
    <property type="project" value="TreeGrafter"/>
</dbReference>
<dbReference type="CDD" id="cd08154">
    <property type="entry name" value="catalase_clade_1"/>
    <property type="match status" value="1"/>
</dbReference>
<dbReference type="FunFam" id="2.40.180.10:FF:000002">
    <property type="entry name" value="Catalase"/>
    <property type="match status" value="1"/>
</dbReference>
<dbReference type="Gene3D" id="2.40.180.10">
    <property type="entry name" value="Catalase core domain"/>
    <property type="match status" value="1"/>
</dbReference>
<dbReference type="InterPro" id="IPR018028">
    <property type="entry name" value="Catalase"/>
</dbReference>
<dbReference type="InterPro" id="IPR024708">
    <property type="entry name" value="Catalase_AS"/>
</dbReference>
<dbReference type="InterPro" id="IPR024711">
    <property type="entry name" value="Catalase_clade1/3"/>
</dbReference>
<dbReference type="InterPro" id="IPR011614">
    <property type="entry name" value="Catalase_core"/>
</dbReference>
<dbReference type="InterPro" id="IPR002226">
    <property type="entry name" value="Catalase_haem_BS"/>
</dbReference>
<dbReference type="InterPro" id="IPR010582">
    <property type="entry name" value="Catalase_immune_responsive"/>
</dbReference>
<dbReference type="InterPro" id="IPR020835">
    <property type="entry name" value="Catalase_sf"/>
</dbReference>
<dbReference type="PANTHER" id="PTHR11465">
    <property type="entry name" value="CATALASE"/>
    <property type="match status" value="1"/>
</dbReference>
<dbReference type="PANTHER" id="PTHR11465:SF23">
    <property type="entry name" value="CATALASE-2"/>
    <property type="match status" value="1"/>
</dbReference>
<dbReference type="Pfam" id="PF00199">
    <property type="entry name" value="Catalase"/>
    <property type="match status" value="1"/>
</dbReference>
<dbReference type="Pfam" id="PF06628">
    <property type="entry name" value="Catalase-rel"/>
    <property type="match status" value="1"/>
</dbReference>
<dbReference type="PIRSF" id="PIRSF038928">
    <property type="entry name" value="Catalase_clade1-3"/>
    <property type="match status" value="1"/>
</dbReference>
<dbReference type="PRINTS" id="PR00067">
    <property type="entry name" value="CATALASE"/>
</dbReference>
<dbReference type="SMART" id="SM01060">
    <property type="entry name" value="Catalase"/>
    <property type="match status" value="1"/>
</dbReference>
<dbReference type="SUPFAM" id="SSF56634">
    <property type="entry name" value="Heme-dependent catalase-like"/>
    <property type="match status" value="1"/>
</dbReference>
<dbReference type="PROSITE" id="PS00437">
    <property type="entry name" value="CATALASE_1"/>
    <property type="match status" value="1"/>
</dbReference>
<dbReference type="PROSITE" id="PS00438">
    <property type="entry name" value="CATALASE_2"/>
    <property type="match status" value="1"/>
</dbReference>
<dbReference type="PROSITE" id="PS51402">
    <property type="entry name" value="CATALASE_3"/>
    <property type="match status" value="1"/>
</dbReference>
<name>CATA1_CUCPE</name>
<proteinExistence type="evidence at transcript level"/>
<keyword id="KW-0330">Glyoxysome</keyword>
<keyword id="KW-0349">Heme</keyword>
<keyword id="KW-0376">Hydrogen peroxide</keyword>
<keyword id="KW-0408">Iron</keyword>
<keyword id="KW-0479">Metal-binding</keyword>
<keyword id="KW-0560">Oxidoreductase</keyword>
<keyword id="KW-0575">Peroxidase</keyword>
<keyword id="KW-0576">Peroxisome</keyword>
<sequence>MDPYRHRPSSAFNAPFWTTNSGAPVWNNNSSMTVGPRGPILLEDYHLVEKLANFDRERIPERVVHARGASAKGFFEVTHDITNLSCADFLRAPGVQTPVIVRFSTVIHERGSPETLRDPRGFAVKFYTREGNFDLVGNNFPVFFIRDGMKFTRHVHPLKPNPKSHIQENWRILDFFSHHPESLNMFSFLFDDIGIPQDYRHMDGSGVNTYTLINKAGKAHYVKFHWRPTCGVKSLLEEDAIRVGGSNHSHATQDLYDSIAAGNYPEWKLFIQTIDPDHEDKYDFDPLDVTKTWPEDILPLQPVGRMVLNKNIDNFFAENEQLAFCPAIIVPGVYYSDDKLLQTRIFSYADTQRHRLGPNYLQLPANAPKCAHHNNHHEGFMNFMHRDEEVNYFPSRFDPSRHAERYPHPPAVCSGKRERCIIEKENNFKEPGERYRSWTPDRQERFVRRWVDALSDTRVTHEIRSIWISYWSQADRSLGQKLASHLNVRPSI</sequence>
<organism>
    <name type="scientific">Cucurbita pepo</name>
    <name type="common">Vegetable marrow</name>
    <name type="synonym">Summer squash</name>
    <dbReference type="NCBI Taxonomy" id="3663"/>
    <lineage>
        <taxon>Eukaryota</taxon>
        <taxon>Viridiplantae</taxon>
        <taxon>Streptophyta</taxon>
        <taxon>Embryophyta</taxon>
        <taxon>Tracheophyta</taxon>
        <taxon>Spermatophyta</taxon>
        <taxon>Magnoliopsida</taxon>
        <taxon>eudicotyledons</taxon>
        <taxon>Gunneridae</taxon>
        <taxon>Pentapetalae</taxon>
        <taxon>rosids</taxon>
        <taxon>fabids</taxon>
        <taxon>Cucurbitales</taxon>
        <taxon>Cucurbitaceae</taxon>
        <taxon>Cucurbiteae</taxon>
        <taxon>Cucurbita</taxon>
    </lineage>
</organism>
<evidence type="ECO:0000250" key="1"/>
<evidence type="ECO:0000255" key="2">
    <source>
        <dbReference type="PROSITE-ProRule" id="PRU10013"/>
    </source>
</evidence>
<evidence type="ECO:0000305" key="3"/>